<proteinExistence type="evidence at protein level"/>
<keyword id="KW-0002">3D-structure</keyword>
<keyword id="KW-1073">Activation of host caspases by virus</keyword>
<keyword id="KW-0014">AIDS</keyword>
<keyword id="KW-0064">Aspartyl protease</keyword>
<keyword id="KW-0167">Capsid protein</keyword>
<keyword id="KW-0229">DNA integration</keyword>
<keyword id="KW-0233">DNA recombination</keyword>
<keyword id="KW-0238">DNA-binding</keyword>
<keyword id="KW-0239">DNA-directed DNA polymerase</keyword>
<keyword id="KW-0255">Endonuclease</keyword>
<keyword id="KW-1262">Eukaryotic host gene expression shutoff by virus</keyword>
<keyword id="KW-1193">Eukaryotic host translation shutoff by virus</keyword>
<keyword id="KW-1032">Host cell membrane</keyword>
<keyword id="KW-1035">Host cytoplasm</keyword>
<keyword id="KW-1039">Host endosome</keyword>
<keyword id="KW-1190">Host gene expression shutoff by virus</keyword>
<keyword id="KW-1043">Host membrane</keyword>
<keyword id="KW-1048">Host nucleus</keyword>
<keyword id="KW-0945">Host-virus interaction</keyword>
<keyword id="KW-0378">Hydrolase</keyword>
<keyword id="KW-0446">Lipid-binding</keyword>
<keyword id="KW-0449">Lipoprotein</keyword>
<keyword id="KW-0460">Magnesium</keyword>
<keyword id="KW-0472">Membrane</keyword>
<keyword id="KW-0479">Metal-binding</keyword>
<keyword id="KW-1119">Modulation of host cell apoptosis by virus</keyword>
<keyword id="KW-0511">Multifunctional enzyme</keyword>
<keyword id="KW-0519">Myristate</keyword>
<keyword id="KW-0540">Nuclease</keyword>
<keyword id="KW-0548">Nucleotidyltransferase</keyword>
<keyword id="KW-0597">Phosphoprotein</keyword>
<keyword id="KW-0645">Protease</keyword>
<keyword id="KW-1185">Reference proteome</keyword>
<keyword id="KW-0677">Repeat</keyword>
<keyword id="KW-0688">Ribosomal frameshifting</keyword>
<keyword id="KW-0694">RNA-binding</keyword>
<keyword id="KW-0695">RNA-directed DNA polymerase</keyword>
<keyword id="KW-0808">Transferase</keyword>
<keyword id="KW-1179">Viral genome integration</keyword>
<keyword id="KW-0543">Viral nucleoprotein</keyword>
<keyword id="KW-1163">Viral penetration into host nucleus</keyword>
<keyword id="KW-1188">Viral release from host cell</keyword>
<keyword id="KW-0946">Virion</keyword>
<keyword id="KW-0917">Virion maturation</keyword>
<keyword id="KW-1160">Virus entry into host cell</keyword>
<keyword id="KW-0862">Zinc</keyword>
<keyword id="KW-0863">Zinc-finger</keyword>
<dbReference type="EC" id="3.4.23.16"/>
<dbReference type="EC" id="2.7.7.49"/>
<dbReference type="EC" id="2.7.7.7"/>
<dbReference type="EC" id="3.1.26.13"/>
<dbReference type="EC" id="3.1.13.2"/>
<dbReference type="EC" id="2.7.7.-" evidence="5"/>
<dbReference type="EC" id="3.1.-.-" evidence="5"/>
<dbReference type="EMBL" id="U52953">
    <property type="protein sequence ID" value="AAB61122.1"/>
    <property type="status" value="ALT_FRAME"/>
    <property type="molecule type" value="Genomic_DNA"/>
</dbReference>
<dbReference type="EMBL" id="U52953">
    <property type="protein sequence ID" value="AAB61123.1"/>
    <property type="status" value="ALT_FRAME"/>
    <property type="molecule type" value="Genomic_DNA"/>
</dbReference>
<dbReference type="PDB" id="2R5P">
    <property type="method" value="X-ray"/>
    <property type="resolution" value="2.30 A"/>
    <property type="chains" value="A/B/C/D=485-583"/>
</dbReference>
<dbReference type="PDB" id="2R5Q">
    <property type="method" value="X-ray"/>
    <property type="resolution" value="2.30 A"/>
    <property type="chains" value="A/B/C/D=485-583"/>
</dbReference>
<dbReference type="PDB" id="2R8N">
    <property type="method" value="X-ray"/>
    <property type="resolution" value="1.20 A"/>
    <property type="chains" value="A=485-583"/>
</dbReference>
<dbReference type="PDBsum" id="2R5P"/>
<dbReference type="PDBsum" id="2R5Q"/>
<dbReference type="PDBsum" id="2R8N"/>
<dbReference type="SMR" id="O12158"/>
<dbReference type="MEROPS" id="A02.001"/>
<dbReference type="EvolutionaryTrace" id="O12158"/>
<dbReference type="PRO" id="PR:O12158"/>
<dbReference type="Proteomes" id="UP000007686">
    <property type="component" value="Segment"/>
</dbReference>
<dbReference type="GO" id="GO:0043657">
    <property type="term" value="C:host cell"/>
    <property type="evidence" value="ECO:0007669"/>
    <property type="project" value="GOC"/>
</dbReference>
<dbReference type="GO" id="GO:0042025">
    <property type="term" value="C:host cell nucleus"/>
    <property type="evidence" value="ECO:0007669"/>
    <property type="project" value="UniProtKB-SubCell"/>
</dbReference>
<dbReference type="GO" id="GO:0020002">
    <property type="term" value="C:host cell plasma membrane"/>
    <property type="evidence" value="ECO:0007669"/>
    <property type="project" value="UniProtKB-SubCell"/>
</dbReference>
<dbReference type="GO" id="GO:0072494">
    <property type="term" value="C:host multivesicular body"/>
    <property type="evidence" value="ECO:0007669"/>
    <property type="project" value="UniProtKB-SubCell"/>
</dbReference>
<dbReference type="GO" id="GO:0016020">
    <property type="term" value="C:membrane"/>
    <property type="evidence" value="ECO:0007669"/>
    <property type="project" value="UniProtKB-KW"/>
</dbReference>
<dbReference type="GO" id="GO:0019013">
    <property type="term" value="C:viral nucleocapsid"/>
    <property type="evidence" value="ECO:0007669"/>
    <property type="project" value="UniProtKB-KW"/>
</dbReference>
<dbReference type="GO" id="GO:0055036">
    <property type="term" value="C:virion membrane"/>
    <property type="evidence" value="ECO:0007669"/>
    <property type="project" value="UniProtKB-SubCell"/>
</dbReference>
<dbReference type="GO" id="GO:0004190">
    <property type="term" value="F:aspartic-type endopeptidase activity"/>
    <property type="evidence" value="ECO:0007669"/>
    <property type="project" value="UniProtKB-KW"/>
</dbReference>
<dbReference type="GO" id="GO:0003677">
    <property type="term" value="F:DNA binding"/>
    <property type="evidence" value="ECO:0007669"/>
    <property type="project" value="UniProtKB-KW"/>
</dbReference>
<dbReference type="GO" id="GO:0003887">
    <property type="term" value="F:DNA-directed DNA polymerase activity"/>
    <property type="evidence" value="ECO:0007669"/>
    <property type="project" value="UniProtKB-KW"/>
</dbReference>
<dbReference type="GO" id="GO:0004533">
    <property type="term" value="F:exoribonuclease H activity"/>
    <property type="evidence" value="ECO:0007669"/>
    <property type="project" value="UniProtKB-EC"/>
</dbReference>
<dbReference type="GO" id="GO:0008289">
    <property type="term" value="F:lipid binding"/>
    <property type="evidence" value="ECO:0007669"/>
    <property type="project" value="UniProtKB-KW"/>
</dbReference>
<dbReference type="GO" id="GO:0035613">
    <property type="term" value="F:RNA stem-loop binding"/>
    <property type="evidence" value="ECO:0007669"/>
    <property type="project" value="TreeGrafter"/>
</dbReference>
<dbReference type="GO" id="GO:0003964">
    <property type="term" value="F:RNA-directed DNA polymerase activity"/>
    <property type="evidence" value="ECO:0007669"/>
    <property type="project" value="UniProtKB-KW"/>
</dbReference>
<dbReference type="GO" id="GO:0004523">
    <property type="term" value="F:RNA-DNA hybrid ribonuclease activity"/>
    <property type="evidence" value="ECO:0007669"/>
    <property type="project" value="InterPro"/>
</dbReference>
<dbReference type="GO" id="GO:0005198">
    <property type="term" value="F:structural molecule activity"/>
    <property type="evidence" value="ECO:0007669"/>
    <property type="project" value="InterPro"/>
</dbReference>
<dbReference type="GO" id="GO:0008270">
    <property type="term" value="F:zinc ion binding"/>
    <property type="evidence" value="ECO:0007669"/>
    <property type="project" value="UniProtKB-KW"/>
</dbReference>
<dbReference type="GO" id="GO:0015074">
    <property type="term" value="P:DNA integration"/>
    <property type="evidence" value="ECO:0007669"/>
    <property type="project" value="UniProtKB-KW"/>
</dbReference>
<dbReference type="GO" id="GO:0006310">
    <property type="term" value="P:DNA recombination"/>
    <property type="evidence" value="ECO:0007669"/>
    <property type="project" value="UniProtKB-KW"/>
</dbReference>
<dbReference type="GO" id="GO:0075713">
    <property type="term" value="P:establishment of integrated proviral latency"/>
    <property type="evidence" value="ECO:0007669"/>
    <property type="project" value="UniProtKB-KW"/>
</dbReference>
<dbReference type="GO" id="GO:0006508">
    <property type="term" value="P:proteolysis"/>
    <property type="evidence" value="ECO:0007669"/>
    <property type="project" value="UniProtKB-KW"/>
</dbReference>
<dbReference type="GO" id="GO:0046718">
    <property type="term" value="P:symbiont entry into host cell"/>
    <property type="evidence" value="ECO:0007669"/>
    <property type="project" value="UniProtKB-KW"/>
</dbReference>
<dbReference type="GO" id="GO:0052151">
    <property type="term" value="P:symbiont-mediated activation of host apoptosis"/>
    <property type="evidence" value="ECO:0007669"/>
    <property type="project" value="UniProtKB-KW"/>
</dbReference>
<dbReference type="GO" id="GO:0039657">
    <property type="term" value="P:symbiont-mediated suppression of host gene expression"/>
    <property type="evidence" value="ECO:0007669"/>
    <property type="project" value="UniProtKB-KW"/>
</dbReference>
<dbReference type="GO" id="GO:0044826">
    <property type="term" value="P:viral genome integration into host DNA"/>
    <property type="evidence" value="ECO:0007669"/>
    <property type="project" value="UniProtKB-KW"/>
</dbReference>
<dbReference type="GO" id="GO:0075732">
    <property type="term" value="P:viral penetration into host nucleus"/>
    <property type="evidence" value="ECO:0007669"/>
    <property type="project" value="UniProtKB-KW"/>
</dbReference>
<dbReference type="GO" id="GO:0075523">
    <property type="term" value="P:viral translational frameshifting"/>
    <property type="evidence" value="ECO:0007669"/>
    <property type="project" value="UniProtKB-KW"/>
</dbReference>
<dbReference type="CDD" id="cd05482">
    <property type="entry name" value="HIV_retropepsin_like"/>
    <property type="match status" value="1"/>
</dbReference>
<dbReference type="FunFam" id="1.10.1200.30:FF:000001">
    <property type="entry name" value="Gag polyprotein"/>
    <property type="match status" value="1"/>
</dbReference>
<dbReference type="FunFam" id="1.10.375.10:FF:000001">
    <property type="entry name" value="Gag polyprotein"/>
    <property type="match status" value="1"/>
</dbReference>
<dbReference type="FunFam" id="4.10.60.10:FF:000001">
    <property type="entry name" value="Gag polyprotein"/>
    <property type="match status" value="1"/>
</dbReference>
<dbReference type="FunFam" id="2.40.70.10:FF:000001">
    <property type="entry name" value="Gag-Pol polyprotein"/>
    <property type="match status" value="1"/>
</dbReference>
<dbReference type="FunFam" id="3.30.420.10:FF:000025">
    <property type="entry name" value="Gag-Pol polyprotein"/>
    <property type="match status" value="1"/>
</dbReference>
<dbReference type="FunFam" id="3.30.420.10:FF:000017">
    <property type="entry name" value="POL polyprotein"/>
    <property type="match status" value="1"/>
</dbReference>
<dbReference type="FunFam" id="3.30.70.270:FF:000016">
    <property type="entry name" value="POL polyprotein"/>
    <property type="match status" value="1"/>
</dbReference>
<dbReference type="Gene3D" id="1.10.10.200">
    <property type="match status" value="1"/>
</dbReference>
<dbReference type="Gene3D" id="1.10.1200.30">
    <property type="match status" value="1"/>
</dbReference>
<dbReference type="Gene3D" id="3.30.70.270">
    <property type="match status" value="3"/>
</dbReference>
<dbReference type="Gene3D" id="2.40.70.10">
    <property type="entry name" value="Acid Proteases"/>
    <property type="match status" value="1"/>
</dbReference>
<dbReference type="Gene3D" id="3.10.10.10">
    <property type="entry name" value="HIV Type 1 Reverse Transcriptase, subunit A, domain 1"/>
    <property type="match status" value="1"/>
</dbReference>
<dbReference type="Gene3D" id="1.10.375.10">
    <property type="entry name" value="Human Immunodeficiency Virus Type 1 Capsid Protein"/>
    <property type="match status" value="1"/>
</dbReference>
<dbReference type="Gene3D" id="1.10.150.90">
    <property type="entry name" value="Immunodeficiency lentiviruses, gag gene matrix protein p17"/>
    <property type="match status" value="1"/>
</dbReference>
<dbReference type="Gene3D" id="2.30.30.10">
    <property type="entry name" value="Integrase, C-terminal domain superfamily, retroviral"/>
    <property type="match status" value="1"/>
</dbReference>
<dbReference type="Gene3D" id="3.30.420.10">
    <property type="entry name" value="Ribonuclease H-like superfamily/Ribonuclease H"/>
    <property type="match status" value="2"/>
</dbReference>
<dbReference type="Gene3D" id="1.20.5.760">
    <property type="entry name" value="Single helix bin"/>
    <property type="match status" value="1"/>
</dbReference>
<dbReference type="Gene3D" id="4.10.60.10">
    <property type="entry name" value="Zinc finger, CCHC-type"/>
    <property type="match status" value="1"/>
</dbReference>
<dbReference type="InterPro" id="IPR001969">
    <property type="entry name" value="Aspartic_peptidase_AS"/>
</dbReference>
<dbReference type="InterPro" id="IPR043502">
    <property type="entry name" value="DNA/RNA_pol_sf"/>
</dbReference>
<dbReference type="InterPro" id="IPR045345">
    <property type="entry name" value="Gag_p24_C"/>
</dbReference>
<dbReference type="InterPro" id="IPR017856">
    <property type="entry name" value="Integrase-like_N"/>
</dbReference>
<dbReference type="InterPro" id="IPR036862">
    <property type="entry name" value="Integrase_C_dom_sf_retrovir"/>
</dbReference>
<dbReference type="InterPro" id="IPR001037">
    <property type="entry name" value="Integrase_C_retrovir"/>
</dbReference>
<dbReference type="InterPro" id="IPR001584">
    <property type="entry name" value="Integrase_cat-core"/>
</dbReference>
<dbReference type="InterPro" id="IPR003308">
    <property type="entry name" value="Integrase_Zn-bd_dom_N"/>
</dbReference>
<dbReference type="InterPro" id="IPR000071">
    <property type="entry name" value="Lentvrl_matrix_N"/>
</dbReference>
<dbReference type="InterPro" id="IPR012344">
    <property type="entry name" value="Matrix_HIV/RSV_N"/>
</dbReference>
<dbReference type="InterPro" id="IPR001995">
    <property type="entry name" value="Peptidase_A2_cat"/>
</dbReference>
<dbReference type="InterPro" id="IPR021109">
    <property type="entry name" value="Peptidase_aspartic_dom_sf"/>
</dbReference>
<dbReference type="InterPro" id="IPR034170">
    <property type="entry name" value="Retropepsin-like_cat_dom"/>
</dbReference>
<dbReference type="InterPro" id="IPR018061">
    <property type="entry name" value="Retropepsins"/>
</dbReference>
<dbReference type="InterPro" id="IPR008916">
    <property type="entry name" value="Retrov_capsid_C"/>
</dbReference>
<dbReference type="InterPro" id="IPR008919">
    <property type="entry name" value="Retrov_capsid_N"/>
</dbReference>
<dbReference type="InterPro" id="IPR010999">
    <property type="entry name" value="Retrovr_matrix"/>
</dbReference>
<dbReference type="InterPro" id="IPR043128">
    <property type="entry name" value="Rev_trsase/Diguanyl_cyclase"/>
</dbReference>
<dbReference type="InterPro" id="IPR012337">
    <property type="entry name" value="RNaseH-like_sf"/>
</dbReference>
<dbReference type="InterPro" id="IPR002156">
    <property type="entry name" value="RNaseH_domain"/>
</dbReference>
<dbReference type="InterPro" id="IPR036397">
    <property type="entry name" value="RNaseH_sf"/>
</dbReference>
<dbReference type="InterPro" id="IPR000477">
    <property type="entry name" value="RT_dom"/>
</dbReference>
<dbReference type="InterPro" id="IPR010659">
    <property type="entry name" value="RVT_connect"/>
</dbReference>
<dbReference type="InterPro" id="IPR010661">
    <property type="entry name" value="RVT_thumb"/>
</dbReference>
<dbReference type="InterPro" id="IPR001878">
    <property type="entry name" value="Znf_CCHC"/>
</dbReference>
<dbReference type="InterPro" id="IPR036875">
    <property type="entry name" value="Znf_CCHC_sf"/>
</dbReference>
<dbReference type="PANTHER" id="PTHR41694">
    <property type="entry name" value="ENDOGENOUS RETROVIRUS GROUP K MEMBER POL PROTEIN"/>
    <property type="match status" value="1"/>
</dbReference>
<dbReference type="PANTHER" id="PTHR41694:SF3">
    <property type="entry name" value="RNA-DIRECTED DNA POLYMERASE-RELATED"/>
    <property type="match status" value="1"/>
</dbReference>
<dbReference type="Pfam" id="PF00540">
    <property type="entry name" value="Gag_p17"/>
    <property type="match status" value="1"/>
</dbReference>
<dbReference type="Pfam" id="PF19317">
    <property type="entry name" value="Gag_p24_C"/>
    <property type="match status" value="1"/>
</dbReference>
<dbReference type="Pfam" id="PF00552">
    <property type="entry name" value="IN_DBD_C"/>
    <property type="match status" value="1"/>
</dbReference>
<dbReference type="Pfam" id="PF02022">
    <property type="entry name" value="Integrase_Zn"/>
    <property type="match status" value="1"/>
</dbReference>
<dbReference type="Pfam" id="PF00075">
    <property type="entry name" value="RNase_H"/>
    <property type="match status" value="1"/>
</dbReference>
<dbReference type="Pfam" id="PF00665">
    <property type="entry name" value="rve"/>
    <property type="match status" value="1"/>
</dbReference>
<dbReference type="Pfam" id="PF00077">
    <property type="entry name" value="RVP"/>
    <property type="match status" value="1"/>
</dbReference>
<dbReference type="Pfam" id="PF00078">
    <property type="entry name" value="RVT_1"/>
    <property type="match status" value="1"/>
</dbReference>
<dbReference type="Pfam" id="PF06815">
    <property type="entry name" value="RVT_connect"/>
    <property type="match status" value="1"/>
</dbReference>
<dbReference type="Pfam" id="PF06817">
    <property type="entry name" value="RVT_thumb"/>
    <property type="match status" value="1"/>
</dbReference>
<dbReference type="Pfam" id="PF00098">
    <property type="entry name" value="zf-CCHC"/>
    <property type="match status" value="2"/>
</dbReference>
<dbReference type="PRINTS" id="PR00234">
    <property type="entry name" value="HIV1MATRIX"/>
</dbReference>
<dbReference type="SMART" id="SM00343">
    <property type="entry name" value="ZnF_C2HC"/>
    <property type="match status" value="2"/>
</dbReference>
<dbReference type="SUPFAM" id="SSF50630">
    <property type="entry name" value="Acid proteases"/>
    <property type="match status" value="1"/>
</dbReference>
<dbReference type="SUPFAM" id="SSF50122">
    <property type="entry name" value="DNA-binding domain of retroviral integrase"/>
    <property type="match status" value="1"/>
</dbReference>
<dbReference type="SUPFAM" id="SSF56672">
    <property type="entry name" value="DNA/RNA polymerases"/>
    <property type="match status" value="1"/>
</dbReference>
<dbReference type="SUPFAM" id="SSF46919">
    <property type="entry name" value="N-terminal Zn binding domain of HIV integrase"/>
    <property type="match status" value="1"/>
</dbReference>
<dbReference type="SUPFAM" id="SSF47836">
    <property type="entry name" value="Retroviral matrix proteins"/>
    <property type="match status" value="1"/>
</dbReference>
<dbReference type="SUPFAM" id="SSF47353">
    <property type="entry name" value="Retrovirus capsid dimerization domain-like"/>
    <property type="match status" value="1"/>
</dbReference>
<dbReference type="SUPFAM" id="SSF47943">
    <property type="entry name" value="Retrovirus capsid protein, N-terminal core domain"/>
    <property type="match status" value="1"/>
</dbReference>
<dbReference type="SUPFAM" id="SSF57756">
    <property type="entry name" value="Retrovirus zinc finger-like domains"/>
    <property type="match status" value="1"/>
</dbReference>
<dbReference type="SUPFAM" id="SSF53098">
    <property type="entry name" value="Ribonuclease H-like"/>
    <property type="match status" value="2"/>
</dbReference>
<dbReference type="PROSITE" id="PS50175">
    <property type="entry name" value="ASP_PROT_RETROV"/>
    <property type="match status" value="1"/>
</dbReference>
<dbReference type="PROSITE" id="PS00141">
    <property type="entry name" value="ASP_PROTEASE"/>
    <property type="match status" value="1"/>
</dbReference>
<dbReference type="PROSITE" id="PS50994">
    <property type="entry name" value="INTEGRASE"/>
    <property type="match status" value="1"/>
</dbReference>
<dbReference type="PROSITE" id="PS51027">
    <property type="entry name" value="INTEGRASE_DBD"/>
    <property type="match status" value="1"/>
</dbReference>
<dbReference type="PROSITE" id="PS50879">
    <property type="entry name" value="RNASE_H_1"/>
    <property type="match status" value="1"/>
</dbReference>
<dbReference type="PROSITE" id="PS50878">
    <property type="entry name" value="RT_POL"/>
    <property type="match status" value="1"/>
</dbReference>
<dbReference type="PROSITE" id="PS50158">
    <property type="entry name" value="ZF_CCHC"/>
    <property type="match status" value="2"/>
</dbReference>
<dbReference type="PROSITE" id="PS50876">
    <property type="entry name" value="ZF_INTEGRASE"/>
    <property type="match status" value="1"/>
</dbReference>
<accession>O12158</accession>
<evidence type="ECO:0000250" key="1"/>
<evidence type="ECO:0000250" key="2">
    <source>
        <dbReference type="UniProtKB" id="P03347"/>
    </source>
</evidence>
<evidence type="ECO:0000250" key="3">
    <source>
        <dbReference type="UniProtKB" id="P03366"/>
    </source>
</evidence>
<evidence type="ECO:0000250" key="4">
    <source>
        <dbReference type="UniProtKB" id="P03367"/>
    </source>
</evidence>
<evidence type="ECO:0000250" key="5">
    <source>
        <dbReference type="UniProtKB" id="P04585"/>
    </source>
</evidence>
<evidence type="ECO:0000250" key="6">
    <source>
        <dbReference type="UniProtKB" id="P12493"/>
    </source>
</evidence>
<evidence type="ECO:0000250" key="7">
    <source>
        <dbReference type="UniProtKB" id="P12497"/>
    </source>
</evidence>
<evidence type="ECO:0000255" key="8"/>
<evidence type="ECO:0000255" key="9">
    <source>
        <dbReference type="PROSITE-ProRule" id="PRU00047"/>
    </source>
</evidence>
<evidence type="ECO:0000255" key="10">
    <source>
        <dbReference type="PROSITE-ProRule" id="PRU00275"/>
    </source>
</evidence>
<evidence type="ECO:0000255" key="11">
    <source>
        <dbReference type="PROSITE-ProRule" id="PRU00405"/>
    </source>
</evidence>
<evidence type="ECO:0000255" key="12">
    <source>
        <dbReference type="PROSITE-ProRule" id="PRU00408"/>
    </source>
</evidence>
<evidence type="ECO:0000255" key="13">
    <source>
        <dbReference type="PROSITE-ProRule" id="PRU00450"/>
    </source>
</evidence>
<evidence type="ECO:0000255" key="14">
    <source>
        <dbReference type="PROSITE-ProRule" id="PRU00457"/>
    </source>
</evidence>
<evidence type="ECO:0000255" key="15">
    <source>
        <dbReference type="PROSITE-ProRule" id="PRU00506"/>
    </source>
</evidence>
<evidence type="ECO:0000255" key="16">
    <source>
        <dbReference type="PROSITE-ProRule" id="PRU10094"/>
    </source>
</evidence>
<evidence type="ECO:0000256" key="17">
    <source>
        <dbReference type="SAM" id="MobiDB-lite"/>
    </source>
</evidence>
<evidence type="ECO:0000305" key="18"/>
<evidence type="ECO:0007829" key="19">
    <source>
        <dbReference type="PDB" id="2R5P"/>
    </source>
</evidence>
<evidence type="ECO:0007829" key="20">
    <source>
        <dbReference type="PDB" id="2R5Q"/>
    </source>
</evidence>
<evidence type="ECO:0007829" key="21">
    <source>
        <dbReference type="PDB" id="2R8N"/>
    </source>
</evidence>
<organismHost>
    <name type="scientific">Homo sapiens</name>
    <name type="common">Human</name>
    <dbReference type="NCBI Taxonomy" id="9606"/>
</organismHost>
<gene>
    <name type="primary">gag-pol</name>
</gene>
<comment type="function">
    <molecule>Gag-Pol polyprotein</molecule>
    <text evidence="1">Mediates, with Gag polyprotein, the essential events in virion assembly, including binding the plasma membrane, making the protein-protein interactions necessary to create spherical particles, recruiting the viral Env proteins, and packaging the genomic RNA via direct interactions with the RNA packaging sequence (Psi). Gag-Pol polyprotein may regulate its own translation, by the binding genomic RNA in the 5'-UTR. At low concentration, the polyprotein would promote translation, whereas at high concentration, the polyprotein would encapsidate genomic RNA and then shut off translation.</text>
</comment>
<comment type="function">
    <molecule>Matrix protein p17</molecule>
    <text evidence="7">Targets the polyprotein to the plasma membrane via a multipartite membrane-binding signal, that includes its myristoylated N-terminus. Matrix protein is part of the pre-integration complex. Implicated in the release from host cell mediated by Vpu. Binds to RNA.</text>
</comment>
<comment type="function">
    <molecule>Capsid protein p24</molecule>
    <text evidence="5 7">Forms the conical core that encapsulates the genomic RNA-nucleocapsid complex in the virion. Most core are conical, with only 7% tubular. The core is constituted by capsid protein hexamer subunits. The core is disassembled soon after virion entry (By similarity). Host restriction factors such as TRIM5-alpha or TRIMCyp bind retroviral capsids and cause premature capsid disassembly, leading to blocks in reverse transcription. Capsid restriction by TRIM5 is one of the factors which restricts HIV-1 to the human species. Host PIN1 apparently facilitates the virion uncoating. On the other hand, interactions with PDZD8 or CYPA stabilize the capsid.</text>
</comment>
<comment type="function">
    <molecule>Nucleocapsid protein p7</molecule>
    <text evidence="5">Encapsulates and protects viral dimeric unspliced genomic RNA (gRNA). Binds these RNAs through its zinc fingers. Acts as a nucleic acid chaperone which is involved in rearangement of nucleic acid secondary structure during gRNA retrotranscription. Also facilitates template switch leading to recombination. As part of the polyprotein, participates in gRNA dimerization, packaging, tRNA incorporation and virion assembly.</text>
</comment>
<comment type="function">
    <molecule>Protease</molecule>
    <text evidence="5 10">Aspartyl protease that mediates proteolytic cleavages of Gag and Gag-Pol polyproteins during or shortly after the release of the virion from the plasma membrane. Cleavages take place as an ordered, step-wise cascade to yield mature proteins. This process is called maturation. Displays maximal activity during the budding process just prior to particle release from the cell. Also cleaves Nef and Vif, probably concomitantly with viral structural proteins on maturation of virus particles. Hydrolyzes host EIF4GI and PABP1 in order to shut off the capped cellular mRNA translation. The resulting inhibition of cellular protein synthesis serves to ensure maximal viral gene expression and to evade host immune response. Also mediates cleavage of host YTHDF3. Mediates cleavage of host CARD8, thereby activating the CARD8 inflammasome, leading to the clearance of latent HIV-1 in patient CD4(+) T-cells after viral reactivation; in contrast, HIV-1 can evade CARD8-sensing when its protease remains inactive in infected cells prior to viral budding (By similarity).</text>
</comment>
<comment type="function">
    <molecule>Reverse transcriptase/ribonuclease H</molecule>
    <text evidence="5">Multifunctional enzyme that converts the viral RNA genome into dsDNA in the cytoplasm, shortly after virus entry into the cell. This enzyme displays a DNA polymerase activity that can copy either DNA or RNA templates, and a ribonuclease H (RNase H) activity that cleaves the RNA strand of RNA-DNA heteroduplexes in a partially processive 3' to 5' endonucleasic mode. Conversion of viral genomic RNA into dsDNA requires many steps. A tRNA(3)-Lys binds to the primer-binding site (PBS) situated at the 5'-end of the viral RNA. RT uses the 3' end of the tRNA primer to perform a short round of RNA-dependent minus-strand DNA synthesis. The reading proceeds through the U5 region and ends after the repeated (R) region which is present at both ends of viral RNA. The portion of the RNA-DNA heteroduplex is digested by the RNase H, resulting in a ssDNA product attached to the tRNA primer. This ssDNA/tRNA hybridizes with the identical R region situated at the 3' end of viral RNA. This template exchange, known as minus-strand DNA strong stop transfer, can be either intra- or intermolecular. RT uses the 3' end of this newly synthesized short ssDNA to perform the RNA-dependent minus-strand DNA synthesis of the whole template. RNase H digests the RNA template except for two polypurine tracts (PPTs) situated at the 5'-end and near the center of the genome. It is not clear if both polymerase and RNase H activities are simultaneous. RNase H probably can proceed both in a polymerase-dependent (RNA cut into small fragments by the same RT performing DNA synthesis) and a polymerase-independent mode (cleavage of remaining RNA fragments by free RTs). Secondly, RT performs DNA-directed plus-strand DNA synthesis using the PPTs that have not been removed by RNase H as primers. PPTs and tRNA primers are then removed by RNase H. The 3' and 5' ssDNA PBS regions hybridize to form a circular dsDNA intermediate. Strand displacement synthesis by RT to the PBS and PPT ends produces a blunt ended, linear dsDNA copy of the viral genome that includes long terminal repeats (LTRs) at both ends.</text>
</comment>
<comment type="function">
    <molecule>Integrase</molecule>
    <text evidence="5">Catalyzes viral DNA integration into the host chromosome, by performing a series of DNA cutting and joining reactions. This enzyme activity takes place after virion entry into a cell and reverse transcription of the RNA genome in dsDNA. The first step in the integration process is 3' processing. This step requires a complex comprising the viral genome, matrix protein, Vpr and integrase. This complex is called the pre-integration complex (PIC). The integrase protein removes 2 nucleotides from each 3' end of the viral DNA, leaving recessed CA OH's at the 3' ends. In the second step, the PIC enters cell nucleus. This process is mediated through integrase and Vpr proteins, and allows the virus to infect a non dividing cell. This ability to enter the nucleus is specific of lentiviruses, other retroviruses cannot and rely on cell division to access cell chromosomes. In the third step, termed strand transfer, the integrase protein joins the previously processed 3' ends to the 5' ends of strands of target cellular DNA at the site of integration. The 5'-ends are produced by integrase-catalyzed staggered cuts, 5 bp apart. A Y-shaped, gapped, recombination intermediate results, with the 5'-ends of the viral DNA strands and the 3' ends of target DNA strands remaining unjoined, flanking a gap of 5 bp. The last step is viral DNA integration into host chromosome. This involves host DNA repair synthesis in which the 5 bp gaps between the unjoined strands are filled in and then ligated. Since this process occurs at both cuts flanking the HIV genome, a 5 bp duplication of host DNA is produced at the ends of HIV-1 integration. Alternatively, Integrase may catalyze the excision of viral DNA just after strand transfer, this is termed disintegration.</text>
</comment>
<comment type="catalytic activity">
    <reaction evidence="10">
        <text>Specific for a P1 residue that is hydrophobic, and P1' variable, but often Pro.</text>
        <dbReference type="EC" id="3.4.23.16"/>
    </reaction>
</comment>
<comment type="catalytic activity">
    <reaction evidence="1">
        <text>Endohydrolysis of RNA in RNA/DNA hybrids. Three different cleavage modes: 1. sequence-specific internal cleavage of RNA. Human immunodeficiency virus type 1 and Moloney murine leukemia virus enzymes prefer to cleave the RNA strand one nucleotide away from the RNA-DNA junction. 2. RNA 5'-end directed cleavage 13-19 nucleotides from the RNA end. 3. DNA 3'-end directed cleavage 15-20 nucleotides away from the primer terminus.</text>
        <dbReference type="EC" id="3.1.26.13"/>
    </reaction>
</comment>
<comment type="catalytic activity">
    <reaction evidence="1">
        <text>3'-end directed exonucleolytic cleavage of viral RNA-DNA hybrid.</text>
        <dbReference type="EC" id="3.1.13.2"/>
    </reaction>
</comment>
<comment type="catalytic activity">
    <reaction evidence="11">
        <text>DNA(n) + a 2'-deoxyribonucleoside 5'-triphosphate = DNA(n+1) + diphosphate</text>
        <dbReference type="Rhea" id="RHEA:22508"/>
        <dbReference type="Rhea" id="RHEA-COMP:17339"/>
        <dbReference type="Rhea" id="RHEA-COMP:17340"/>
        <dbReference type="ChEBI" id="CHEBI:33019"/>
        <dbReference type="ChEBI" id="CHEBI:61560"/>
        <dbReference type="ChEBI" id="CHEBI:173112"/>
        <dbReference type="EC" id="2.7.7.49"/>
    </reaction>
</comment>
<comment type="catalytic activity">
    <reaction evidence="11">
        <text>DNA(n) + a 2'-deoxyribonucleoside 5'-triphosphate = DNA(n+1) + diphosphate</text>
        <dbReference type="Rhea" id="RHEA:22508"/>
        <dbReference type="Rhea" id="RHEA-COMP:17339"/>
        <dbReference type="Rhea" id="RHEA-COMP:17340"/>
        <dbReference type="ChEBI" id="CHEBI:33019"/>
        <dbReference type="ChEBI" id="CHEBI:61560"/>
        <dbReference type="ChEBI" id="CHEBI:173112"/>
        <dbReference type="EC" id="2.7.7.7"/>
    </reaction>
</comment>
<comment type="cofactor">
    <cofactor evidence="1">
        <name>Mg(2+)</name>
        <dbReference type="ChEBI" id="CHEBI:18420"/>
    </cofactor>
    <text evidence="1">Binds 2 magnesium ions for reverse transcriptase polymerase activity.</text>
</comment>
<comment type="cofactor">
    <cofactor evidence="1">
        <name>Mg(2+)</name>
        <dbReference type="ChEBI" id="CHEBI:18420"/>
    </cofactor>
    <text evidence="1">Binds 2 magnesium ions for ribonuclease H (RNase H) activity. Substrate-binding is a precondition for magnesium binding.</text>
</comment>
<comment type="cofactor">
    <cofactor evidence="1">
        <name>Mg(2+)</name>
        <dbReference type="ChEBI" id="CHEBI:18420"/>
    </cofactor>
    <text evidence="1">Magnesium ions are required for integrase activity. Binds at least 1, maybe 2 magnesium ions.</text>
</comment>
<comment type="activity regulation">
    <text evidence="1">Protease: The viral protease is inhibited by many synthetic protease inhibitors (PIs), such as amprenavir, atazanavir, indinavir, loprinavir, nelfinavir, ritonavir and saquinavir. Use of protease inhibitors in tritherapy regimens permit more ambitious therapeutic strategies. Reverse transcriptase/ribonuclease H: RT can be inhibited either by nucleoside RT inhibitors (NRTIs) or by non nucleoside RT inhibitors (NNRTIs). NRTIs act as chain terminators, whereas NNRTIs inhibit DNA polymerization by binding a small hydrophobic pocket near the RT active site and inducing an allosteric change in this region. Classical NRTIs are abacavir, adefovir (PMEA), didanosine (ddI), lamivudine (3TC), stavudine (d4T), tenofovir (PMPA), zalcitabine (ddC), and zidovudine (AZT). Classical NNRTIs are atevirdine (BHAP U-87201E), delavirdine, efavirenz (DMP-266), emivirine (I-EBU), and nevirapine (BI-RG-587). The tritherapies used as a basic effective treatment of AIDS associate two NRTIs and one NNRTI.</text>
</comment>
<comment type="subunit">
    <molecule>Matrix protein p17</molecule>
    <text evidence="5 7">Homotrimer; further assembles as hexamers of trimers (By similarity). Interacts with gp41 (via C-terminus) (By similarity). Interacts with host CALM1; this interaction induces a conformational change in the Matrix protein, triggering exposure of the myristate group (By similarity). Interacts with host AP3D1; this interaction allows the polyprotein trafficking to multivesicular bodies during virus assembly (By similarity). Part of the pre-integration complex (PIC) which is composed of viral genome, matrix protein, Vpr and integrase (By similarity).</text>
</comment>
<comment type="subunit">
    <molecule>Capsid protein p24</molecule>
    <text evidence="5 7">Homodimer; the homodimer further multimerizes as homohexamers or homopentamers. Interacts with human PPIA/CYPA (By similarity); This interaction stabilizes the capsid. Interacts with human NUP153 (By similarity). Interacts with host PDZD8; this interaction stabilizes the capsid (By similarity). Interacts with monkey TRIM5; this interaction destabilizes the capsid (By similarity).</text>
</comment>
<comment type="subunit">
    <molecule>Protease</molecule>
    <text evidence="5 7">Homodimer, whose active site consists of two apposed aspartic acid residues.</text>
</comment>
<comment type="subunit">
    <molecule>Reverse transcriptase/ribonuclease H</molecule>
    <text evidence="3">Heterodimer of p66 RT and p51 RT (RT p66/p51) (By similarity). Heterodimerization of RT is essential for DNA polymerase activity (By similarity). The overall folding of the subdomains is similar in p66 RT and p51 RT but the spatial arrangements of the subdomains are dramatically different (By similarity).</text>
</comment>
<comment type="subunit">
    <molecule>Integrase</molecule>
    <text evidence="4 5 7">Homotetramer; may further associate as a homohexadecamer (By similarity). Part of the pre-integration complex (PIC) which is composed of viral genome, matrix protein, Vpr and integrase. Interacts with human SMARCB1/INI1 and human PSIP1/LEDGF isoform 1. Interacts with human KPNA3; this interaction might play a role in nuclear import of the pre-integration complex (By similarity). Interacts with human NUP153; this interaction might play a role in nuclear import of the pre-integration complex (By similarity).</text>
</comment>
<comment type="subcellular location">
    <molecule>Gag-Pol polyprotein</molecule>
    <subcellularLocation>
        <location>Host cell membrane</location>
        <topology>Lipid-anchor</topology>
    </subcellularLocation>
    <subcellularLocation>
        <location>Host endosome</location>
        <location>Host multivesicular body</location>
    </subcellularLocation>
    <text evidence="7">These locations are linked to virus assembly sites. The main location is the cell membrane, but under some circumstances, late endosomal compartments can serve as productive sites for virion assembly.</text>
</comment>
<comment type="subcellular location">
    <molecule>Matrix protein p17</molecule>
    <subcellularLocation>
        <location>Virion membrane</location>
        <topology evidence="18">Lipid-anchor</topology>
    </subcellularLocation>
    <subcellularLocation>
        <location evidence="1">Host nucleus</location>
    </subcellularLocation>
    <subcellularLocation>
        <location evidence="1">Host cytoplasm</location>
    </subcellularLocation>
</comment>
<comment type="subcellular location">
    <molecule>Capsid protein p24</molecule>
    <subcellularLocation>
        <location evidence="18">Virion</location>
    </subcellularLocation>
</comment>
<comment type="subcellular location">
    <molecule>Nucleocapsid protein p7</molecule>
    <subcellularLocation>
        <location evidence="18">Virion</location>
    </subcellularLocation>
</comment>
<comment type="subcellular location">
    <molecule>Reverse transcriptase/ribonuclease H</molecule>
    <subcellularLocation>
        <location evidence="18">Virion</location>
    </subcellularLocation>
</comment>
<comment type="subcellular location">
    <molecule>Integrase</molecule>
    <subcellularLocation>
        <location evidence="18">Virion</location>
    </subcellularLocation>
    <subcellularLocation>
        <location evidence="18">Host nucleus</location>
    </subcellularLocation>
    <subcellularLocation>
        <location evidence="18">Host cytoplasm</location>
    </subcellularLocation>
    <text evidence="18">Nuclear at initial phase, cytoplasmic at assembly.</text>
</comment>
<comment type="alternative products">
    <event type="ribosomal frameshifting"/>
    <isoform>
        <id>O12158-1</id>
        <name>Gag-Pol polyprotein</name>
        <sequence type="displayed"/>
    </isoform>
    <isoform>
        <id>O12157-1</id>
        <name>Gag polyprotein</name>
        <sequence type="external"/>
    </isoform>
    <text>Translation results in the formation of the Gag polyprotein most of the time. Ribosomal frameshifting at the gag-pol genes boundary occurs at low frequency and produces the Gag-Pol polyprotein. This strategy of translation probably allows the virus to modulate the quantity of each viral protein. Maintenance of a correct Gag to Gag-Pol ratio is essential for RNA dimerization and viral infectivity.</text>
</comment>
<comment type="domain">
    <molecule>Reverse transcriptase/ribonuclease H</molecule>
    <text evidence="1">RT is structured in five subdomains: finger, palm, thumb, connection and RNase H. Within the palm subdomain, the 'primer grip' region is thought to be involved in the positioning of the primer terminus for accommodating the incoming nucleotide. The RNase H domain stabilizes the association of RT with primer-template.</text>
</comment>
<comment type="domain">
    <molecule>Reverse transcriptase/ribonuclease H</molecule>
    <text evidence="1">The tryptophan repeat motif is involved in RT p66/p51 dimerization (By similarity).</text>
</comment>
<comment type="domain">
    <molecule>Integrase</molecule>
    <text evidence="1">The core domain contains the D-x(n)-D-x(35)-E motif, named for the phylogenetically conserved glutamic acid and aspartic acid residues and the invariant 35 amino acid spacing between the second and third acidic residues. Each acidic residue of the D,D(35)E motif is independently essential for the 3'-processing and strand transfer activities of purified integrase protein.</text>
</comment>
<comment type="PTM">
    <molecule>Gag-Pol polyprotein</molecule>
    <text evidence="5 11">Specific enzymatic cleavages by the viral protease yield mature proteins. The protease is released by autocatalytic cleavage. The polyprotein is cleaved during and after budding, this process is termed maturation. Proteolytic cleavage of p66 RT removes the RNase H domain to yield the p51 RT subunit. Nucleocapsid protein p7 might be further cleaved after virus entry.</text>
</comment>
<comment type="PTM">
    <molecule>Matrix protein p17</molecule>
    <text evidence="5">Tyrosine phosphorylated presumably in the virion by a host kinase. Phosphorylation is apparently not a major regulator of membrane association.</text>
</comment>
<comment type="PTM">
    <molecule>Capsid protein p24</molecule>
    <text evidence="6">Phosphorylated possibly by host MAPK1; this phosphorylation is necessary for Pin1-mediated virion uncoating.</text>
</comment>
<comment type="PTM">
    <molecule>Nucleocapsid protein p7</molecule>
    <text evidence="2">Methylated by host PRMT6, impairing its function by reducing RNA annealing and the initiation of reverse transcription.</text>
</comment>
<comment type="miscellaneous">
    <molecule>Reverse transcriptase/ribonuclease H</molecule>
    <text evidence="1">Error-prone enzyme that lacks a proof-reading function. High mutations rate is a direct consequence of this characteristic. RT also displays frequent template switching leading to high recombination rate. Recombination mostly occurs between homologous regions of the two copackaged RNA genomes. If these two RNA molecules derive from different viral strains, reverse transcription will give rise to highly recombinated proviral DNAs.</text>
</comment>
<comment type="miscellaneous">
    <text>HIV-1 lineages are divided in three main groups, M (for Major), O (for Outlier), and N (for New, or Non-M, Non-O). The vast majority of strains found worldwide belong to the group M. Group O seems to be endemic to and largely confined to Cameroon and neighboring countries in West Central Africa, where these viruses represent a small minority of HIV-1 strains. The group N is represented by a limited number of isolates from Cameroonian persons. The group M is further subdivided in 9 clades or subtypes (A to D, F to H, J and K).</text>
</comment>
<comment type="miscellaneous">
    <text>Resistance to inhibitors associated with mutations are observed both in viral protease and in reverse transcriptase. Most of the time, single mutations confer only a modest reduction in drug susceptibility. Combination of several mutations is usually required to develop a high-level drug resistance. These mutations are predominantly found in clade B viruses and not in other genotypes. They are listed in the clade B representative isolate HXB2 (AC P04585).</text>
</comment>
<comment type="miscellaneous">
    <molecule>Isoform Gag-Pol polyprotein</molecule>
    <text>Produced by -1 ribosomal frameshifting.</text>
</comment>
<comment type="sequence caution" evidence="18">
    <conflict type="frameshift">
        <sequence resource="EMBL-CDS" id="AAB61122"/>
    </conflict>
</comment>
<comment type="sequence caution" evidence="18">
    <conflict type="frameshift">
        <sequence resource="EMBL-CDS" id="AAB61123"/>
    </conflict>
</comment>
<comment type="online information" name="HIV drug resistance mutations">
    <link uri="https://www.iasusa.org/hiv-drug-resistance/hiv-drug-resistance-mutations/"/>
</comment>
<comment type="online information" name="hivdb">
    <link uri="https://hivdb.stanford.edu"/>
    <text>HIV drug resistance database</text>
</comment>
<reference key="1">
    <citation type="journal article" date="1996" name="J. Virol.">
        <title>Molecular cloning and analysis of functional envelope genes from human immunodeficiency virus type 1 sequence subtypes A through G. The WHO and NIAID Networks for HIV Isolation and Characterization.</title>
        <authorList>
            <person name="Gao F."/>
            <person name="Morrison S.G."/>
            <person name="Robertson D.L."/>
            <person name="Thornton C.L."/>
            <person name="Craig S."/>
            <person name="Karlsson G."/>
            <person name="Sodroski J."/>
            <person name="Morgado M."/>
            <person name="Galvao-Castro B."/>
            <person name="von Briesen H."/>
            <person name="Beddows S."/>
            <person name="Weber J."/>
            <person name="Sharp P.M."/>
            <person name="Shaw G.M."/>
            <person name="Hahn B.H."/>
        </authorList>
    </citation>
    <scope>NUCLEOTIDE SEQUENCE [GENOMIC DNA]</scope>
</reference>
<feature type="initiator methionine" description="Removed; by host" evidence="1">
    <location>
        <position position="1"/>
    </location>
</feature>
<feature type="chain" id="PRO_0000325005" description="Gag-Pol polyprotein" evidence="1">
    <location>
        <begin position="2"/>
        <end position="1431"/>
    </location>
</feature>
<feature type="chain" id="PRO_0000325006" description="Matrix protein p17" evidence="1">
    <location>
        <begin position="2"/>
        <end position="130"/>
    </location>
</feature>
<feature type="chain" id="PRO_0000325007" description="Capsid protein p24" evidence="1">
    <location>
        <begin position="131"/>
        <end position="361"/>
    </location>
</feature>
<feature type="peptide" id="PRO_0000325008" description="Spacer peptide 1" evidence="1">
    <location>
        <begin position="362"/>
        <end position="374"/>
    </location>
</feature>
<feature type="chain" id="PRO_0000325009" description="Nucleocapsid protein p7" evidence="1">
    <location>
        <begin position="375"/>
        <end position="429"/>
    </location>
</feature>
<feature type="peptide" id="PRO_0000325010" description="Transframe peptide" evidence="8">
    <location>
        <begin position="430"/>
        <end position="437"/>
    </location>
</feature>
<feature type="chain" id="PRO_0000325011" description="p6-pol" evidence="8">
    <location>
        <begin position="438"/>
        <end position="484"/>
    </location>
</feature>
<feature type="chain" id="PRO_0000325012" description="Protease" evidence="1">
    <location>
        <begin position="485"/>
        <end position="583"/>
    </location>
</feature>
<feature type="chain" id="PRO_0000325013" description="Reverse transcriptase/ribonuclease H" evidence="1">
    <location>
        <begin position="584"/>
        <end position="1143"/>
    </location>
</feature>
<feature type="chain" id="PRO_0000325014" description="p51 RT" evidence="1">
    <location>
        <begin position="584"/>
        <end position="1023"/>
    </location>
</feature>
<feature type="chain" id="PRO_0000325015" description="p15" evidence="1">
    <location>
        <begin position="1024"/>
        <end position="1143"/>
    </location>
</feature>
<feature type="chain" id="PRO_0000325016" description="Integrase" evidence="1">
    <location>
        <begin position="1144"/>
        <end position="1431"/>
    </location>
</feature>
<feature type="domain" description="Peptidase A2" evidence="10">
    <location>
        <begin position="504"/>
        <end position="573"/>
    </location>
</feature>
<feature type="domain" description="Reverse transcriptase" evidence="11">
    <location>
        <begin position="627"/>
        <end position="817"/>
    </location>
</feature>
<feature type="domain" description="RNase H type-1" evidence="12">
    <location>
        <begin position="1017"/>
        <end position="1140"/>
    </location>
</feature>
<feature type="domain" description="Integrase catalytic" evidence="14">
    <location>
        <begin position="1197"/>
        <end position="1347"/>
    </location>
</feature>
<feature type="zinc finger region" description="CCHC-type 1" evidence="9">
    <location>
        <begin position="387"/>
        <end position="404"/>
    </location>
</feature>
<feature type="zinc finger region" description="CCHC-type 2" evidence="9">
    <location>
        <begin position="408"/>
        <end position="425"/>
    </location>
</feature>
<feature type="zinc finger region" description="Integrase-type" evidence="13">
    <location>
        <begin position="1146"/>
        <end position="1187"/>
    </location>
</feature>
<feature type="DNA-binding region" description="Integrase-type" evidence="15">
    <location>
        <begin position="1366"/>
        <end position="1413"/>
    </location>
</feature>
<feature type="region of interest" description="Interaction with Gp41" evidence="7">
    <location>
        <begin position="7"/>
        <end position="31"/>
    </location>
</feature>
<feature type="region of interest" description="Interaction with host CALM1" evidence="5">
    <location>
        <begin position="8"/>
        <end position="43"/>
    </location>
</feature>
<feature type="region of interest" description="Interaction with host AP3D1" evidence="7">
    <location>
        <begin position="12"/>
        <end position="19"/>
    </location>
</feature>
<feature type="region of interest" description="Interaction with membrane phosphatidylinositol 4,5-bisphosphate and RNA" evidence="7">
    <location>
        <begin position="14"/>
        <end position="33"/>
    </location>
</feature>
<feature type="region of interest" description="Interaction with membrane phosphatidylinositol 4,5-bisphosphate" evidence="7">
    <location>
        <begin position="73"/>
        <end position="77"/>
    </location>
</feature>
<feature type="region of interest" description="Disordered" evidence="17">
    <location>
        <begin position="106"/>
        <end position="126"/>
    </location>
</feature>
<feature type="region of interest" description="Interaction with human PPIA/CYPA and NUP153" evidence="7">
    <location>
        <begin position="187"/>
        <end position="225"/>
    </location>
</feature>
<feature type="region of interest" description="Dimerization/Multimerization of capsid protein p24" evidence="5">
    <location>
        <begin position="275"/>
        <end position="361"/>
    </location>
</feature>
<feature type="region of interest" description="Disordered" evidence="17">
    <location>
        <begin position="437"/>
        <end position="461"/>
    </location>
</feature>
<feature type="region of interest" description="Dimerization of protease" evidence="5">
    <location>
        <begin position="485"/>
        <end position="489"/>
    </location>
</feature>
<feature type="region of interest" description="Dimerization of protease" evidence="5">
    <location>
        <begin position="533"/>
        <end position="539"/>
    </location>
</feature>
<feature type="region of interest" description="Dimerization of protease" evidence="5">
    <location>
        <begin position="572"/>
        <end position="584"/>
    </location>
</feature>
<feature type="region of interest" description="RT 'primer grip'" evidence="1">
    <location>
        <begin position="810"/>
        <end position="818"/>
    </location>
</feature>
<feature type="short sequence motif" description="Nuclear export signal" evidence="1">
    <location>
        <begin position="16"/>
        <end position="22"/>
    </location>
</feature>
<feature type="short sequence motif" description="Nuclear localization signal" evidence="1">
    <location>
        <begin position="26"/>
        <end position="32"/>
    </location>
</feature>
<feature type="short sequence motif" description="Tryptophan repeat motif" evidence="1">
    <location>
        <begin position="981"/>
        <end position="997"/>
    </location>
</feature>
<feature type="active site" description="For protease activity; shared with dimeric partner" evidence="16">
    <location>
        <position position="509"/>
    </location>
</feature>
<feature type="binding site" evidence="1">
    <location>
        <position position="693"/>
    </location>
    <ligand>
        <name>Mg(2+)</name>
        <dbReference type="ChEBI" id="CHEBI:18420"/>
        <label>1</label>
        <note>catalytic; for reverse transcriptase activity</note>
    </ligand>
</feature>
<feature type="binding site" evidence="1">
    <location>
        <position position="768"/>
    </location>
    <ligand>
        <name>Mg(2+)</name>
        <dbReference type="ChEBI" id="CHEBI:18420"/>
        <label>1</label>
        <note>catalytic; for reverse transcriptase activity</note>
    </ligand>
</feature>
<feature type="binding site" evidence="1">
    <location>
        <position position="769"/>
    </location>
    <ligand>
        <name>Mg(2+)</name>
        <dbReference type="ChEBI" id="CHEBI:18420"/>
        <label>1</label>
        <note>catalytic; for reverse transcriptase activity</note>
    </ligand>
</feature>
<feature type="binding site" evidence="1">
    <location>
        <position position="1026"/>
    </location>
    <ligand>
        <name>Mg(2+)</name>
        <dbReference type="ChEBI" id="CHEBI:18420"/>
        <label>2</label>
        <note>catalytic; for RNase H activity</note>
    </ligand>
</feature>
<feature type="binding site" evidence="1">
    <location>
        <position position="1061"/>
    </location>
    <ligand>
        <name>Mg(2+)</name>
        <dbReference type="ChEBI" id="CHEBI:18420"/>
        <label>2</label>
        <note>catalytic; for RNase H activity</note>
    </ligand>
</feature>
<feature type="binding site" evidence="1">
    <location>
        <position position="1081"/>
    </location>
    <ligand>
        <name>Mg(2+)</name>
        <dbReference type="ChEBI" id="CHEBI:18420"/>
        <label>2</label>
        <note>catalytic; for RNase H activity</note>
    </ligand>
</feature>
<feature type="binding site" evidence="1">
    <location>
        <position position="1132"/>
    </location>
    <ligand>
        <name>Mg(2+)</name>
        <dbReference type="ChEBI" id="CHEBI:18420"/>
        <label>2</label>
        <note>catalytic; for RNase H activity</note>
    </ligand>
</feature>
<feature type="binding site" evidence="13">
    <location>
        <position position="1155"/>
    </location>
    <ligand>
        <name>Zn(2+)</name>
        <dbReference type="ChEBI" id="CHEBI:29105"/>
    </ligand>
</feature>
<feature type="binding site" evidence="13">
    <location>
        <position position="1159"/>
    </location>
    <ligand>
        <name>Zn(2+)</name>
        <dbReference type="ChEBI" id="CHEBI:29105"/>
    </ligand>
</feature>
<feature type="binding site" evidence="13">
    <location>
        <position position="1183"/>
    </location>
    <ligand>
        <name>Zn(2+)</name>
        <dbReference type="ChEBI" id="CHEBI:29105"/>
    </ligand>
</feature>
<feature type="binding site" evidence="13">
    <location>
        <position position="1186"/>
    </location>
    <ligand>
        <name>Zn(2+)</name>
        <dbReference type="ChEBI" id="CHEBI:29105"/>
    </ligand>
</feature>
<feature type="binding site" evidence="1">
    <location>
        <position position="1207"/>
    </location>
    <ligand>
        <name>Mg(2+)</name>
        <dbReference type="ChEBI" id="CHEBI:18420"/>
        <label>3</label>
        <note>catalytic; for integrase activity</note>
    </ligand>
</feature>
<feature type="binding site" evidence="1">
    <location>
        <position position="1259"/>
    </location>
    <ligand>
        <name>Mg(2+)</name>
        <dbReference type="ChEBI" id="CHEBI:18420"/>
        <label>3</label>
        <note>catalytic; for integrase activity</note>
    </ligand>
</feature>
<feature type="binding site" evidence="5">
    <location>
        <position position="1295"/>
    </location>
    <ligand>
        <name>Mg(2+)</name>
        <dbReference type="ChEBI" id="CHEBI:18420"/>
        <label>3</label>
        <note>catalytic; for integrase activity</note>
    </ligand>
</feature>
<feature type="site" description="Cleavage; by viral protease" evidence="1">
    <location>
        <begin position="130"/>
        <end position="131"/>
    </location>
</feature>
<feature type="site" description="Cis/trans isomerization of proline peptide bond; by human PPIA/CYPA" evidence="1">
    <location>
        <begin position="219"/>
        <end position="220"/>
    </location>
</feature>
<feature type="site" description="Cleavage; by viral protease" evidence="1">
    <location>
        <begin position="361"/>
        <end position="362"/>
    </location>
</feature>
<feature type="site" description="Cleavage; by viral protease" evidence="1">
    <location>
        <begin position="374"/>
        <end position="375"/>
    </location>
</feature>
<feature type="site" description="Cleavage; by viral protease" evidence="8">
    <location>
        <begin position="429"/>
        <end position="430"/>
    </location>
</feature>
<feature type="site" description="Cleavage; by viral protease" evidence="1">
    <location>
        <begin position="437"/>
        <end position="438"/>
    </location>
</feature>
<feature type="site" description="Cleavage; by viral protease" evidence="1">
    <location>
        <begin position="484"/>
        <end position="485"/>
    </location>
</feature>
<feature type="site" description="Cleavage; by viral protease" evidence="1">
    <location>
        <begin position="583"/>
        <end position="584"/>
    </location>
</feature>
<feature type="site" description="Essential for RT p66/p51 heterodimerization" evidence="1">
    <location>
        <position position="984"/>
    </location>
</feature>
<feature type="site" description="Essential for RT p66/p51 heterodimerization" evidence="1">
    <location>
        <position position="997"/>
    </location>
</feature>
<feature type="site" description="Cleavage; by viral protease; partial" evidence="8">
    <location>
        <begin position="1023"/>
        <end position="1024"/>
    </location>
</feature>
<feature type="site" description="Cleavage; by viral protease" evidence="1">
    <location>
        <begin position="1143"/>
        <end position="1144"/>
    </location>
</feature>
<feature type="modified residue" description="Phosphotyrosine; by host" evidence="1">
    <location>
        <position position="130"/>
    </location>
</feature>
<feature type="lipid moiety-binding region" description="N-myristoyl glycine; by host" evidence="1">
    <location>
        <position position="2"/>
    </location>
</feature>
<feature type="strand" evidence="20">
    <location>
        <begin position="486"/>
        <end position="488"/>
    </location>
</feature>
<feature type="strand" evidence="21">
    <location>
        <begin position="489"/>
        <end position="491"/>
    </location>
</feature>
<feature type="strand" evidence="21">
    <location>
        <begin position="494"/>
        <end position="499"/>
    </location>
</feature>
<feature type="strand" evidence="21">
    <location>
        <begin position="502"/>
        <end position="508"/>
    </location>
</feature>
<feature type="strand" evidence="21">
    <location>
        <begin position="516"/>
        <end position="519"/>
    </location>
</feature>
<feature type="strand" evidence="21">
    <location>
        <begin position="527"/>
        <end position="532"/>
    </location>
</feature>
<feature type="strand" evidence="21">
    <location>
        <begin position="534"/>
        <end position="550"/>
    </location>
</feature>
<feature type="strand" evidence="21">
    <location>
        <begin position="553"/>
        <end position="562"/>
    </location>
</feature>
<feature type="helix" evidence="21">
    <location>
        <begin position="571"/>
        <end position="576"/>
    </location>
</feature>
<feature type="strand" evidence="19">
    <location>
        <begin position="580"/>
        <end position="582"/>
    </location>
</feature>
<name>POL_HV192</name>
<sequence length="1431" mass="161671">MGARASILRGGKLDAWERIKLKPGGKKHYMMKHLVWASRELERFALDPGLLETSEGCKQIMKQLQPALQTGTKELISLHNTVATLYCVHEKIDVRDTKEALDKIKEEQNKSQQKTQQAEAADKGKVSQNYPIVQNLQGQMVHQPISARTLNAWVKVVEEKAFSPEVIPMFTALSEGATPQDLNTMLNTVGGHQAAMQMLKDTINEEAAEWDRLHPVHAGPVAPGQMREPRGSDIAGTTSTLQEQITWMTNNPPVPVGDIYKRWIILGLNKIVRMYSPVSILDIKQGPKEPFRDYVDRFFKTLRAEQATQDVKNWMTDTLLVQNANPDCKTILRALGPGASLEEMMTACQGVGGPGHKARVLAEAMSKVNNTNIMMQRSNCKGPKRTIKCFNCGKEGHLARNCRAPRKKGCWKCGKEGHQVKDCTERQANFFRENLAFPQGEARKSSSEQNRANSPTRRELQVWGRDNNSLSEAGDDRQGTALNFPQITLWQRPLVNIKVGGQLKEALLDTGADDTVLEEIKLPGNWKPKMIGGIGGFIKVRQYDQILIEICGKKAIGTVLVGPTPVNIIGRNMLTQLGCTLNFPISPIETVPVKLKPGMDGPKVKQWLLTEEKIKALTAICDEMEREGKITKIGPENPYNTPVFAIKKKDSTKWRKLVDFRELNKRTWDFWEVQLGIPHPAGLKKKKSVTVLDVGDAYFSVPLDEGFRKYTAFTIPSINNETPGIRYQYNVLPQGWKGSPSIFQSSTTKILEPFRAQNPEIIIYQYMDDLYVGSDLEIGQHRAKIEELREHLLKWGFTTPDKKHQKEPPFLWMGYELHPDKWTVQPIQLPEKDSWTVNDIQKLVGKLNWASQIYPGIKVRQLCKLLRGAKALTDIVPLTEEAELELAENREILKEPVHGVYYDPSKDLIAEIQKQGQNQWTYQIYQEPFKNLKTGKYAKMRTAHTNDVRQLTEAVQKIALESIIIWGKTPKFRLPIQKETWEAWWTDYWQATWIPEWEFVNTPPLVKLWYQLEKEPIAGAETFYVDGAANREIKMGKAGYVTDRGRQKIVSITETTNQKTELQAIQLALQDSGSEVNIVTDSQYALGIIQAQPDKSESELVNQIIEQLIKKERVYLSWVPAHKGIGGNEQVDKLVSSGIRKVLFLDGINKAQEEHEKYHSNWRAMASEFNLPPIVAKEIVASCDKCQLKGEATHGQVDCSPGIWQLDCTHLEGKIILVAVHVASGYIEAEVIPAETGQETAYFILKLAGRWPVKVIHTDNGSNFISNTVKAACWWAGIQQEFGIPYNPQSQGVVESMNKELKKIIGQVRDQAEHLKTAVQMAVFIHNFKRKGGIGGYSAGERIIDIIATDIQTKELQKQIMKIQNFRVYYRDSRDPIWKGPAKLLWKGEGAVVLQDNSDIKVVPRRKVKIIKDYGKQMAGADCMASRQDED</sequence>
<protein>
    <recommendedName>
        <fullName>Gag-Pol polyprotein</fullName>
    </recommendedName>
    <alternativeName>
        <fullName>Pr160Gag-Pol</fullName>
    </alternativeName>
    <component>
        <recommendedName>
            <fullName>Matrix protein p17</fullName>
            <shortName>MA</shortName>
        </recommendedName>
    </component>
    <component>
        <recommendedName>
            <fullName>Capsid protein p24</fullName>
            <shortName>CA</shortName>
        </recommendedName>
    </component>
    <component>
        <recommendedName>
            <fullName evidence="7">Spacer peptide 1</fullName>
            <shortName>SP1</shortName>
        </recommendedName>
        <alternativeName>
            <fullName>p2</fullName>
        </alternativeName>
    </component>
    <component>
        <recommendedName>
            <fullName>Nucleocapsid protein p7</fullName>
            <shortName>NC</shortName>
        </recommendedName>
    </component>
    <component>
        <recommendedName>
            <fullName>Transframe peptide</fullName>
            <shortName>TF</shortName>
        </recommendedName>
    </component>
    <component>
        <recommendedName>
            <fullName>p6-pol</fullName>
            <shortName>p6*</shortName>
        </recommendedName>
    </component>
    <component>
        <recommendedName>
            <fullName>Protease</fullName>
            <ecNumber>3.4.23.16</ecNumber>
        </recommendedName>
        <alternativeName>
            <fullName>PR</fullName>
        </alternativeName>
        <alternativeName>
            <fullName>Retropepsin</fullName>
        </alternativeName>
    </component>
    <component>
        <recommendedName>
            <fullName>Reverse transcriptase/ribonuclease H</fullName>
            <ecNumber>2.7.7.49</ecNumber>
            <ecNumber>2.7.7.7</ecNumber>
            <ecNumber>3.1.26.13</ecNumber>
        </recommendedName>
        <alternativeName>
            <fullName>Exoribonuclease H</fullName>
            <ecNumber>3.1.13.2</ecNumber>
        </alternativeName>
        <alternativeName>
            <fullName>p66 RT</fullName>
        </alternativeName>
    </component>
    <component>
        <recommendedName>
            <fullName>p51 RT</fullName>
        </recommendedName>
    </component>
    <component>
        <recommendedName>
            <fullName>p15</fullName>
        </recommendedName>
    </component>
    <component>
        <recommendedName>
            <fullName>Integrase</fullName>
            <shortName>IN</shortName>
            <ecNumber evidence="5">2.7.7.-</ecNumber>
            <ecNumber evidence="5">3.1.-.-</ecNumber>
        </recommendedName>
    </component>
</protein>
<organism>
    <name type="scientific">Human immunodeficiency virus type 1 group M subtype C (isolate 92BR025)</name>
    <name type="common">HIV-1</name>
    <dbReference type="NCBI Taxonomy" id="388812"/>
    <lineage>
        <taxon>Viruses</taxon>
        <taxon>Riboviria</taxon>
        <taxon>Pararnavirae</taxon>
        <taxon>Artverviricota</taxon>
        <taxon>Revtraviricetes</taxon>
        <taxon>Ortervirales</taxon>
        <taxon>Retroviridae</taxon>
        <taxon>Orthoretrovirinae</taxon>
        <taxon>Lentivirus</taxon>
        <taxon>Human immunodeficiency virus type 1</taxon>
    </lineage>
</organism>